<organism>
    <name type="scientific">Pseudoalteromonas atlantica (strain T6c / ATCC BAA-1087)</name>
    <dbReference type="NCBI Taxonomy" id="3042615"/>
    <lineage>
        <taxon>Bacteria</taxon>
        <taxon>Pseudomonadati</taxon>
        <taxon>Pseudomonadota</taxon>
        <taxon>Gammaproteobacteria</taxon>
        <taxon>Alteromonadales</taxon>
        <taxon>Alteromonadaceae</taxon>
        <taxon>Paraglaciecola</taxon>
    </lineage>
</organism>
<accession>Q15YB2</accession>
<sequence length="123" mass="12593">MALTKEDILNAIAEMPVMDLVELIEAAEEKFGVTATAAVAAAAPAAGGEAAAEQTEFDVVLTSFGGNKVAVIKAVRGATGLGLKEAKEVVEAAPKAIKEGVAKEEAEELKKTLEEAGAEVELK</sequence>
<keyword id="KW-0687">Ribonucleoprotein</keyword>
<keyword id="KW-0689">Ribosomal protein</keyword>
<dbReference type="EMBL" id="CP000388">
    <property type="protein sequence ID" value="ABG39126.1"/>
    <property type="molecule type" value="Genomic_DNA"/>
</dbReference>
<dbReference type="RefSeq" id="WP_006992806.1">
    <property type="nucleotide sequence ID" value="NC_008228.1"/>
</dbReference>
<dbReference type="SMR" id="Q15YB2"/>
<dbReference type="STRING" id="342610.Patl_0597"/>
<dbReference type="KEGG" id="pat:Patl_0597"/>
<dbReference type="eggNOG" id="COG0222">
    <property type="taxonomic scope" value="Bacteria"/>
</dbReference>
<dbReference type="HOGENOM" id="CLU_086499_3_2_6"/>
<dbReference type="OrthoDB" id="9811748at2"/>
<dbReference type="Proteomes" id="UP000001981">
    <property type="component" value="Chromosome"/>
</dbReference>
<dbReference type="GO" id="GO:0022625">
    <property type="term" value="C:cytosolic large ribosomal subunit"/>
    <property type="evidence" value="ECO:0007669"/>
    <property type="project" value="TreeGrafter"/>
</dbReference>
<dbReference type="GO" id="GO:0003729">
    <property type="term" value="F:mRNA binding"/>
    <property type="evidence" value="ECO:0007669"/>
    <property type="project" value="TreeGrafter"/>
</dbReference>
<dbReference type="GO" id="GO:0003735">
    <property type="term" value="F:structural constituent of ribosome"/>
    <property type="evidence" value="ECO:0007669"/>
    <property type="project" value="InterPro"/>
</dbReference>
<dbReference type="GO" id="GO:0006412">
    <property type="term" value="P:translation"/>
    <property type="evidence" value="ECO:0007669"/>
    <property type="project" value="UniProtKB-UniRule"/>
</dbReference>
<dbReference type="CDD" id="cd00387">
    <property type="entry name" value="Ribosomal_L7_L12"/>
    <property type="match status" value="1"/>
</dbReference>
<dbReference type="FunFam" id="3.30.1390.10:FF:000001">
    <property type="entry name" value="50S ribosomal protein L7/L12"/>
    <property type="match status" value="1"/>
</dbReference>
<dbReference type="Gene3D" id="3.30.1390.10">
    <property type="match status" value="1"/>
</dbReference>
<dbReference type="Gene3D" id="1.20.5.710">
    <property type="entry name" value="Single helix bin"/>
    <property type="match status" value="1"/>
</dbReference>
<dbReference type="HAMAP" id="MF_00368">
    <property type="entry name" value="Ribosomal_bL12"/>
    <property type="match status" value="1"/>
</dbReference>
<dbReference type="InterPro" id="IPR000206">
    <property type="entry name" value="Ribosomal_bL12"/>
</dbReference>
<dbReference type="InterPro" id="IPR013823">
    <property type="entry name" value="Ribosomal_bL12_C"/>
</dbReference>
<dbReference type="InterPro" id="IPR014719">
    <property type="entry name" value="Ribosomal_bL12_C/ClpS-like"/>
</dbReference>
<dbReference type="InterPro" id="IPR008932">
    <property type="entry name" value="Ribosomal_bL12_oligo"/>
</dbReference>
<dbReference type="InterPro" id="IPR036235">
    <property type="entry name" value="Ribosomal_bL12_oligo_N_sf"/>
</dbReference>
<dbReference type="NCBIfam" id="TIGR00855">
    <property type="entry name" value="L12"/>
    <property type="match status" value="1"/>
</dbReference>
<dbReference type="PANTHER" id="PTHR45987">
    <property type="entry name" value="39S RIBOSOMAL PROTEIN L12"/>
    <property type="match status" value="1"/>
</dbReference>
<dbReference type="PANTHER" id="PTHR45987:SF4">
    <property type="entry name" value="LARGE RIBOSOMAL SUBUNIT PROTEIN BL12M"/>
    <property type="match status" value="1"/>
</dbReference>
<dbReference type="Pfam" id="PF00542">
    <property type="entry name" value="Ribosomal_L12"/>
    <property type="match status" value="1"/>
</dbReference>
<dbReference type="Pfam" id="PF16320">
    <property type="entry name" value="Ribosomal_L12_N"/>
    <property type="match status" value="1"/>
</dbReference>
<dbReference type="SUPFAM" id="SSF54736">
    <property type="entry name" value="ClpS-like"/>
    <property type="match status" value="1"/>
</dbReference>
<dbReference type="SUPFAM" id="SSF48300">
    <property type="entry name" value="Ribosomal protein L7/12, oligomerisation (N-terminal) domain"/>
    <property type="match status" value="1"/>
</dbReference>
<evidence type="ECO:0000255" key="1">
    <source>
        <dbReference type="HAMAP-Rule" id="MF_00368"/>
    </source>
</evidence>
<evidence type="ECO:0000305" key="2"/>
<protein>
    <recommendedName>
        <fullName evidence="1">Large ribosomal subunit protein bL12</fullName>
    </recommendedName>
    <alternativeName>
        <fullName evidence="2">50S ribosomal protein L7/L12</fullName>
    </alternativeName>
</protein>
<gene>
    <name evidence="1" type="primary">rplL</name>
    <name type="ordered locus">Patl_0597</name>
</gene>
<proteinExistence type="inferred from homology"/>
<reference key="1">
    <citation type="submission" date="2006-06" db="EMBL/GenBank/DDBJ databases">
        <title>Complete sequence of Pseudoalteromonas atlantica T6c.</title>
        <authorList>
            <consortium name="US DOE Joint Genome Institute"/>
            <person name="Copeland A."/>
            <person name="Lucas S."/>
            <person name="Lapidus A."/>
            <person name="Barry K."/>
            <person name="Detter J.C."/>
            <person name="Glavina del Rio T."/>
            <person name="Hammon N."/>
            <person name="Israni S."/>
            <person name="Dalin E."/>
            <person name="Tice H."/>
            <person name="Pitluck S."/>
            <person name="Saunders E."/>
            <person name="Brettin T."/>
            <person name="Bruce D."/>
            <person name="Han C."/>
            <person name="Tapia R."/>
            <person name="Gilna P."/>
            <person name="Schmutz J."/>
            <person name="Larimer F."/>
            <person name="Land M."/>
            <person name="Hauser L."/>
            <person name="Kyrpides N."/>
            <person name="Kim E."/>
            <person name="Karls A.C."/>
            <person name="Bartlett D."/>
            <person name="Higgins B.P."/>
            <person name="Richardson P."/>
        </authorList>
    </citation>
    <scope>NUCLEOTIDE SEQUENCE [LARGE SCALE GENOMIC DNA]</scope>
    <source>
        <strain>T6c / ATCC BAA-1087</strain>
    </source>
</reference>
<comment type="function">
    <text evidence="1">Forms part of the ribosomal stalk which helps the ribosome interact with GTP-bound translation factors. Is thus essential for accurate translation.</text>
</comment>
<comment type="subunit">
    <text evidence="1">Homodimer. Part of the ribosomal stalk of the 50S ribosomal subunit. Forms a multimeric L10(L12)X complex, where L10 forms an elongated spine to which 2 to 4 L12 dimers bind in a sequential fashion. Binds GTP-bound translation factors.</text>
</comment>
<comment type="similarity">
    <text evidence="1">Belongs to the bacterial ribosomal protein bL12 family.</text>
</comment>
<feature type="chain" id="PRO_1000007060" description="Large ribosomal subunit protein bL12">
    <location>
        <begin position="1"/>
        <end position="123"/>
    </location>
</feature>
<name>RL7_PSEA6</name>